<sequence>MKTEISTADSLRDPPSNGLKADSELVIREDIDQFLPSEVSSLGSDHQNDGEDSDTDSDNFLQDPEDDVDEESTGRGTVTTTSTSTESRGRPSSCIFVASLAAALSDDELCLSVTENFKKYGDLARVKVLRDNANRPYAFVQYNNDHDAKHALIRAQGTLLNGRRLRCEPAKVNRTLYLKNQQSIDFNEISQICEKFGGLEQIVPDRTDNQYTRRYTYPISSANSWFVQFVYRDDAIRAYANLRTDPNWIIEWAQNINVPKNYNLLHKSKFKSSKYHQNNGIINNDGSNNNDNNNSNNNNREDSRRNGDVIEEECGHVHGSDSEEKLTSDGIYDDEDKDSEITIDKRSIFVGQLDKETTREELNRRFSTHGKIQDINLIFKPTNIFAFIKYETEEAAAAALESENHAIFLNKTMHVQYKEVGGRHNRKFSGKNGGSNFNHHQFFSTRSGKTFTGPELNLAPPPINMYRKMSGGSQQESETMMPYMPMGPMPMGPPPPNAASLSDFDMFPPSYSTFMKGMMPLRRKSMPNSWSSPSSKSVNSENESVNGGDENSELPSEIPESSGRYNAANSFTTYNNSSAGNSNNNNNNNNSNSNKSQYKKRYARRSSYGYNEVPPKPYYFQPYYYHPMQYHMGPMGPLHPSQGSAGNHHPYMMVYPMSPPPPSGLDGSMIPPPINVSQSHAANHGSTHVHANEFISNDTGDINEDNKAYSLDY</sequence>
<keyword id="KW-0469">Meiosis</keyword>
<keyword id="KW-0597">Phosphoprotein</keyword>
<keyword id="KW-1185">Reference proteome</keyword>
<keyword id="KW-0677">Repeat</keyword>
<keyword id="KW-0694">RNA-binding</keyword>
<keyword id="KW-0749">Sporulation</keyword>
<keyword id="KW-0832">Ubl conjugation</keyword>
<name>RIM4_YEAST</name>
<reference key="1">
    <citation type="journal article" date="1994" name="Science">
        <title>Complete nucleotide sequence of Saccharomyces cerevisiae chromosome VIII.</title>
        <authorList>
            <person name="Johnston M."/>
            <person name="Andrews S."/>
            <person name="Brinkman R."/>
            <person name="Cooper J."/>
            <person name="Ding H."/>
            <person name="Dover J."/>
            <person name="Du Z."/>
            <person name="Favello A."/>
            <person name="Fulton L."/>
            <person name="Gattung S."/>
            <person name="Geisel C."/>
            <person name="Kirsten J."/>
            <person name="Kucaba T."/>
            <person name="Hillier L.W."/>
            <person name="Jier M."/>
            <person name="Johnston L."/>
            <person name="Langston Y."/>
            <person name="Latreille P."/>
            <person name="Louis E.J."/>
            <person name="Macri C."/>
            <person name="Mardis E."/>
            <person name="Menezes S."/>
            <person name="Mouser L."/>
            <person name="Nhan M."/>
            <person name="Rifkin L."/>
            <person name="Riles L."/>
            <person name="St Peter H."/>
            <person name="Trevaskis E."/>
            <person name="Vaughan K."/>
            <person name="Vignati D."/>
            <person name="Wilcox L."/>
            <person name="Wohldman P."/>
            <person name="Waterston R."/>
            <person name="Wilson R."/>
            <person name="Vaudin M."/>
        </authorList>
    </citation>
    <scope>NUCLEOTIDE SEQUENCE [LARGE SCALE GENOMIC DNA]</scope>
    <source>
        <strain>ATCC 204508 / S288c</strain>
    </source>
</reference>
<reference key="2">
    <citation type="journal article" date="2014" name="G3 (Bethesda)">
        <title>The reference genome sequence of Saccharomyces cerevisiae: Then and now.</title>
        <authorList>
            <person name="Engel S.R."/>
            <person name="Dietrich F.S."/>
            <person name="Fisk D.G."/>
            <person name="Binkley G."/>
            <person name="Balakrishnan R."/>
            <person name="Costanzo M.C."/>
            <person name="Dwight S.S."/>
            <person name="Hitz B.C."/>
            <person name="Karra K."/>
            <person name="Nash R.S."/>
            <person name="Weng S."/>
            <person name="Wong E.D."/>
            <person name="Lloyd P."/>
            <person name="Skrzypek M.S."/>
            <person name="Miyasato S.R."/>
            <person name="Simison M."/>
            <person name="Cherry J.M."/>
        </authorList>
    </citation>
    <scope>GENOME REANNOTATION</scope>
    <source>
        <strain>ATCC 204508 / S288c</strain>
    </source>
</reference>
<reference key="3">
    <citation type="journal article" date="2007" name="Genome Res.">
        <title>Approaching a complete repository of sequence-verified protein-encoding clones for Saccharomyces cerevisiae.</title>
        <authorList>
            <person name="Hu Y."/>
            <person name="Rolfs A."/>
            <person name="Bhullar B."/>
            <person name="Murthy T.V.S."/>
            <person name="Zhu C."/>
            <person name="Berger M.F."/>
            <person name="Camargo A.A."/>
            <person name="Kelley F."/>
            <person name="McCarron S."/>
            <person name="Jepson D."/>
            <person name="Richardson A."/>
            <person name="Raphael J."/>
            <person name="Moreira D."/>
            <person name="Taycher E."/>
            <person name="Zuo D."/>
            <person name="Mohr S."/>
            <person name="Kane M.F."/>
            <person name="Williamson J."/>
            <person name="Simpson A.J.G."/>
            <person name="Bulyk M.L."/>
            <person name="Harlow E."/>
            <person name="Marsischky G."/>
            <person name="Kolodner R.D."/>
            <person name="LaBaer J."/>
        </authorList>
    </citation>
    <scope>NUCLEOTIDE SEQUENCE [GENOMIC DNA]</scope>
    <source>
        <strain>ATCC 204508 / S288c</strain>
    </source>
</reference>
<reference key="4">
    <citation type="journal article" date="1993" name="Genetics">
        <title>Identification of functionally related genes that stimulate early meiotic gene expression in yeast.</title>
        <authorList>
            <person name="Su S.S."/>
            <person name="Mitchell A.P."/>
        </authorList>
    </citation>
    <scope>FUNCTION</scope>
</reference>
<reference key="5">
    <citation type="journal article" date="2000" name="Yeast">
        <title>An RNA-binding protein homologue that promotes sporulation-specific gene expression in Saccharomyces cerevisiae.</title>
        <authorList>
            <person name="Soushko M."/>
            <person name="Mitchell A.P."/>
        </authorList>
    </citation>
    <scope>FUNCTION</scope>
    <scope>INDUCTION</scope>
    <scope>MUTAGENESIS OF PHE-96; PHE-139; PHE-349 AND PHE-385</scope>
</reference>
<reference key="6">
    <citation type="journal article" date="2001" name="Mol. Genet. Genomics">
        <title>RIM4 encodes a meiotic activator required for early events of meiosis in Saccharomyces cerevisiae.</title>
        <authorList>
            <person name="Deng C."/>
            <person name="Saunders W.S."/>
        </authorList>
    </citation>
    <scope>FUNCTION</scope>
    <scope>INDUCTION</scope>
</reference>
<reference key="7">
    <citation type="journal article" date="2005" name="J. Biol. Chem.">
        <title>A high throughput screen to identify substrates for the ubiquitin ligase Rsp5.</title>
        <authorList>
            <person name="Kus B."/>
            <person name="Gajadhar A."/>
            <person name="Stanger K."/>
            <person name="Cho R."/>
            <person name="Sun W."/>
            <person name="Rouleau N."/>
            <person name="Lee T."/>
            <person name="Chan D."/>
            <person name="Wolting C."/>
            <person name="Edwards A."/>
            <person name="Bosse R."/>
            <person name="Rotin D."/>
        </authorList>
    </citation>
    <scope>UBIQUITINATION BY RSP5</scope>
</reference>
<reference key="8">
    <citation type="journal article" date="2007" name="Mol. Syst. Biol.">
        <title>Ubiquitination screen using protein microarrays for comprehensive identification of Rsp5 substrates in yeast.</title>
        <authorList>
            <person name="Gupta R."/>
            <person name="Kus B."/>
            <person name="Fladd C."/>
            <person name="Wasmuth J."/>
            <person name="Tonikian R."/>
            <person name="Sidhu S."/>
            <person name="Krogan N.J."/>
            <person name="Parkinson J."/>
            <person name="Rotin D."/>
        </authorList>
    </citation>
    <scope>UBIQUITINATION BY RSP5</scope>
</reference>
<reference key="9">
    <citation type="journal article" date="2009" name="Science">
        <title>Global analysis of Cdk1 substrate phosphorylation sites provides insights into evolution.</title>
        <authorList>
            <person name="Holt L.J."/>
            <person name="Tuch B.B."/>
            <person name="Villen J."/>
            <person name="Johnson A.D."/>
            <person name="Gygi S.P."/>
            <person name="Morgan D.O."/>
        </authorList>
    </citation>
    <scope>PHOSPHORYLATION [LARGE SCALE ANALYSIS] AT SER-525</scope>
    <scope>IDENTIFICATION BY MASS SPECTROMETRY [LARGE SCALE ANALYSIS]</scope>
</reference>
<organism>
    <name type="scientific">Saccharomyces cerevisiae (strain ATCC 204508 / S288c)</name>
    <name type="common">Baker's yeast</name>
    <dbReference type="NCBI Taxonomy" id="559292"/>
    <lineage>
        <taxon>Eukaryota</taxon>
        <taxon>Fungi</taxon>
        <taxon>Dikarya</taxon>
        <taxon>Ascomycota</taxon>
        <taxon>Saccharomycotina</taxon>
        <taxon>Saccharomycetes</taxon>
        <taxon>Saccharomycetales</taxon>
        <taxon>Saccharomycetaceae</taxon>
        <taxon>Saccharomyces</taxon>
    </lineage>
</organism>
<accession>P38741</accession>
<accession>D3DKU4</accession>
<accession>E9P8V3</accession>
<gene>
    <name type="primary">RIM4</name>
    <name type="ordered locus">YHL024W</name>
</gene>
<feature type="chain" id="PRO_0000082031" description="Meiotic activator RIM4">
    <location>
        <begin position="1"/>
        <end position="713"/>
    </location>
</feature>
<feature type="domain" description="RRM 1" evidence="1">
    <location>
        <begin position="93"/>
        <end position="172"/>
    </location>
</feature>
<feature type="domain" description="RRM 2" evidence="1">
    <location>
        <begin position="346"/>
        <end position="420"/>
    </location>
</feature>
<feature type="region of interest" description="Disordered" evidence="2">
    <location>
        <begin position="1"/>
        <end position="90"/>
    </location>
</feature>
<feature type="region of interest" description="Disordered" evidence="2">
    <location>
        <begin position="276"/>
        <end position="337"/>
    </location>
</feature>
<feature type="region of interest" description="Disordered" evidence="2">
    <location>
        <begin position="524"/>
        <end position="609"/>
    </location>
</feature>
<feature type="compositionally biased region" description="Basic and acidic residues" evidence="2">
    <location>
        <begin position="21"/>
        <end position="31"/>
    </location>
</feature>
<feature type="compositionally biased region" description="Acidic residues" evidence="2">
    <location>
        <begin position="50"/>
        <end position="71"/>
    </location>
</feature>
<feature type="compositionally biased region" description="Low complexity" evidence="2">
    <location>
        <begin position="74"/>
        <end position="90"/>
    </location>
</feature>
<feature type="compositionally biased region" description="Low complexity" evidence="2">
    <location>
        <begin position="278"/>
        <end position="298"/>
    </location>
</feature>
<feature type="compositionally biased region" description="Basic and acidic residues" evidence="2">
    <location>
        <begin position="299"/>
        <end position="327"/>
    </location>
</feature>
<feature type="compositionally biased region" description="Low complexity" evidence="2">
    <location>
        <begin position="526"/>
        <end position="546"/>
    </location>
</feature>
<feature type="compositionally biased region" description="Polar residues" evidence="2">
    <location>
        <begin position="563"/>
        <end position="574"/>
    </location>
</feature>
<feature type="compositionally biased region" description="Low complexity" evidence="2">
    <location>
        <begin position="575"/>
        <end position="594"/>
    </location>
</feature>
<feature type="modified residue" description="Phosphoserine" evidence="9">
    <location>
        <position position="525"/>
    </location>
</feature>
<feature type="mutagenesis site" description="Leads to absolute sporulation defect." evidence="3">
    <original>F</original>
    <variation>L</variation>
    <location>
        <position position="96"/>
    </location>
</feature>
<feature type="mutagenesis site" description="Leads to absolute sporulation defect." evidence="3">
    <original>F</original>
    <variation>L</variation>
    <location>
        <position position="139"/>
    </location>
</feature>
<feature type="mutagenesis site" description="Leads to mild sporulation defect." evidence="3">
    <original>F</original>
    <variation>L</variation>
    <location>
        <position position="349"/>
    </location>
</feature>
<feature type="mutagenesis site" description="Leads to absolute sporulation defect." evidence="3">
    <original>F</original>
    <variation>L</variation>
    <location>
        <position position="385"/>
    </location>
</feature>
<feature type="sequence conflict" description="In Ref. 3; AAS56440." evidence="8" ref="3">
    <original>F</original>
    <variation>V</variation>
    <location>
        <position position="385"/>
    </location>
</feature>
<proteinExistence type="evidence at protein level"/>
<protein>
    <recommendedName>
        <fullName>Meiotic activator RIM4</fullName>
    </recommendedName>
    <alternativeName>
        <fullName>Regulator of IME2 protein 4</fullName>
    </alternativeName>
</protein>
<evidence type="ECO:0000255" key="1">
    <source>
        <dbReference type="PROSITE-ProRule" id="PRU00176"/>
    </source>
</evidence>
<evidence type="ECO:0000256" key="2">
    <source>
        <dbReference type="SAM" id="MobiDB-lite"/>
    </source>
</evidence>
<evidence type="ECO:0000269" key="3">
    <source>
    </source>
</evidence>
<evidence type="ECO:0000269" key="4">
    <source>
    </source>
</evidence>
<evidence type="ECO:0000269" key="5">
    <source>
    </source>
</evidence>
<evidence type="ECO:0000269" key="6">
    <source>
    </source>
</evidence>
<evidence type="ECO:0000269" key="7">
    <source>
    </source>
</evidence>
<evidence type="ECO:0000305" key="8"/>
<evidence type="ECO:0007744" key="9">
    <source>
    </source>
</evidence>
<dbReference type="EMBL" id="U11582">
    <property type="protein sequence ID" value="AAB65077.1"/>
    <property type="molecule type" value="Genomic_DNA"/>
</dbReference>
<dbReference type="EMBL" id="AY558114">
    <property type="protein sequence ID" value="AAS56440.1"/>
    <property type="molecule type" value="Genomic_DNA"/>
</dbReference>
<dbReference type="EMBL" id="BK006934">
    <property type="protein sequence ID" value="DAA06661.1"/>
    <property type="molecule type" value="Genomic_DNA"/>
</dbReference>
<dbReference type="PIR" id="S46838">
    <property type="entry name" value="S46838"/>
</dbReference>
<dbReference type="RefSeq" id="NP_011839.1">
    <property type="nucleotide sequence ID" value="NM_001179104.1"/>
</dbReference>
<dbReference type="BioGRID" id="36398">
    <property type="interactions" value="140"/>
</dbReference>
<dbReference type="DIP" id="DIP-5673N"/>
<dbReference type="FunCoup" id="P38741">
    <property type="interactions" value="172"/>
</dbReference>
<dbReference type="IntAct" id="P38741">
    <property type="interactions" value="3"/>
</dbReference>
<dbReference type="MINT" id="P38741"/>
<dbReference type="STRING" id="4932.YHL024W"/>
<dbReference type="GlyGen" id="P38741">
    <property type="glycosylation" value="1 site, 1 O-linked glycan (1 site)"/>
</dbReference>
<dbReference type="iPTMnet" id="P38741"/>
<dbReference type="PaxDb" id="4932-YHL024W"/>
<dbReference type="PeptideAtlas" id="P38741"/>
<dbReference type="EnsemblFungi" id="YHL024W_mRNA">
    <property type="protein sequence ID" value="YHL024W"/>
    <property type="gene ID" value="YHL024W"/>
</dbReference>
<dbReference type="GeneID" id="856361"/>
<dbReference type="KEGG" id="sce:YHL024W"/>
<dbReference type="AGR" id="SGD:S000001016"/>
<dbReference type="SGD" id="S000001016">
    <property type="gene designation" value="RIM4"/>
</dbReference>
<dbReference type="VEuPathDB" id="FungiDB:YHL024W"/>
<dbReference type="eggNOG" id="ENOG502QUGB">
    <property type="taxonomic scope" value="Eukaryota"/>
</dbReference>
<dbReference type="HOGENOM" id="CLU_016668_0_0_1"/>
<dbReference type="InParanoid" id="P38741"/>
<dbReference type="OMA" id="LNKTMHV"/>
<dbReference type="OrthoDB" id="410044at2759"/>
<dbReference type="BioCyc" id="YEAST:G3O-31044-MONOMER"/>
<dbReference type="BioGRID-ORCS" id="856361">
    <property type="hits" value="0 hits in 10 CRISPR screens"/>
</dbReference>
<dbReference type="PRO" id="PR:P38741"/>
<dbReference type="Proteomes" id="UP000002311">
    <property type="component" value="Chromosome VIII"/>
</dbReference>
<dbReference type="RNAct" id="P38741">
    <property type="molecule type" value="protein"/>
</dbReference>
<dbReference type="GO" id="GO:0005737">
    <property type="term" value="C:cytoplasm"/>
    <property type="evidence" value="ECO:0007005"/>
    <property type="project" value="SGD"/>
</dbReference>
<dbReference type="GO" id="GO:0005634">
    <property type="term" value="C:nucleus"/>
    <property type="evidence" value="ECO:0007669"/>
    <property type="project" value="GOC"/>
</dbReference>
<dbReference type="GO" id="GO:0003729">
    <property type="term" value="F:mRNA binding"/>
    <property type="evidence" value="ECO:0000318"/>
    <property type="project" value="GO_Central"/>
</dbReference>
<dbReference type="GO" id="GO:0003723">
    <property type="term" value="F:RNA binding"/>
    <property type="evidence" value="ECO:0000315"/>
    <property type="project" value="SGD"/>
</dbReference>
<dbReference type="GO" id="GO:0017069">
    <property type="term" value="F:snRNA binding"/>
    <property type="evidence" value="ECO:0000318"/>
    <property type="project" value="GO_Central"/>
</dbReference>
<dbReference type="GO" id="GO:0051321">
    <property type="term" value="P:meiotic cell cycle"/>
    <property type="evidence" value="ECO:0000315"/>
    <property type="project" value="SGD"/>
</dbReference>
<dbReference type="GO" id="GO:0000398">
    <property type="term" value="P:mRNA splicing, via spliceosome"/>
    <property type="evidence" value="ECO:0000318"/>
    <property type="project" value="GO_Central"/>
</dbReference>
<dbReference type="GO" id="GO:0006279">
    <property type="term" value="P:premeiotic DNA replication"/>
    <property type="evidence" value="ECO:0000315"/>
    <property type="project" value="SGD"/>
</dbReference>
<dbReference type="GO" id="GO:0007131">
    <property type="term" value="P:reciprocal meiotic recombination"/>
    <property type="evidence" value="ECO:0000315"/>
    <property type="project" value="SGD"/>
</dbReference>
<dbReference type="GO" id="GO:0030435">
    <property type="term" value="P:sporulation resulting in formation of a cellular spore"/>
    <property type="evidence" value="ECO:0000315"/>
    <property type="project" value="SGD"/>
</dbReference>
<dbReference type="CDD" id="cd12453">
    <property type="entry name" value="RRM1_RIM4_like"/>
    <property type="match status" value="1"/>
</dbReference>
<dbReference type="CDD" id="cd12454">
    <property type="entry name" value="RRM2_RIM4_like"/>
    <property type="match status" value="1"/>
</dbReference>
<dbReference type="CDD" id="cd00590">
    <property type="entry name" value="RRM_SF"/>
    <property type="match status" value="1"/>
</dbReference>
<dbReference type="FunFam" id="3.30.70.330:FF:000861">
    <property type="entry name" value="Rim4p"/>
    <property type="match status" value="1"/>
</dbReference>
<dbReference type="FunFam" id="3.30.70.330:FF:000974">
    <property type="entry name" value="Rim4p"/>
    <property type="match status" value="1"/>
</dbReference>
<dbReference type="Gene3D" id="3.30.70.330">
    <property type="match status" value="2"/>
</dbReference>
<dbReference type="InterPro" id="IPR012677">
    <property type="entry name" value="Nucleotide-bd_a/b_plait_sf"/>
</dbReference>
<dbReference type="InterPro" id="IPR035979">
    <property type="entry name" value="RBD_domain_sf"/>
</dbReference>
<dbReference type="InterPro" id="IPR034352">
    <property type="entry name" value="Rim4_RRM1"/>
</dbReference>
<dbReference type="InterPro" id="IPR000504">
    <property type="entry name" value="RRM_dom"/>
</dbReference>
<dbReference type="InterPro" id="IPR003954">
    <property type="entry name" value="RRM_dom_euk"/>
</dbReference>
<dbReference type="InterPro" id="IPR050907">
    <property type="entry name" value="SRSF"/>
</dbReference>
<dbReference type="PANTHER" id="PTHR23147">
    <property type="entry name" value="SERINE/ARGININE RICH SPLICING FACTOR"/>
    <property type="match status" value="1"/>
</dbReference>
<dbReference type="Pfam" id="PF00076">
    <property type="entry name" value="RRM_1"/>
    <property type="match status" value="2"/>
</dbReference>
<dbReference type="SMART" id="SM00360">
    <property type="entry name" value="RRM"/>
    <property type="match status" value="2"/>
</dbReference>
<dbReference type="SMART" id="SM00361">
    <property type="entry name" value="RRM_1"/>
    <property type="match status" value="2"/>
</dbReference>
<dbReference type="SUPFAM" id="SSF54928">
    <property type="entry name" value="RNA-binding domain, RBD"/>
    <property type="match status" value="2"/>
</dbReference>
<dbReference type="PROSITE" id="PS50102">
    <property type="entry name" value="RRM"/>
    <property type="match status" value="2"/>
</dbReference>
<comment type="function">
    <text evidence="3 4 7">Positive regulator of sporulation-specific genes and of sporulation. Required for premeiotic DNA synthesis and meiotic chromosomal segregation. May act in a nutritional signaling pathway.</text>
</comment>
<comment type="induction">
    <text evidence="3 4">Expressed at elevated levels early in meiosis. Expression depends on IME1.</text>
</comment>
<comment type="PTM">
    <text evidence="5 6">Polyubiquitinated by RSP5.</text>
</comment>